<proteinExistence type="evidence at protein level"/>
<accession>Q96BT3</accession>
<accession>Q96I29</accession>
<accession>Q96IC6</accession>
<accession>Q96NK9</accession>
<accession>Q9H901</accession>
<name>CENPT_HUMAN</name>
<sequence>MADHNPDSDSTPRTLLRRVLDTADPRTPRRPRSARAGARRALLETASPRKLSGQTRTIARGRSHGARSVGRSAHIQASGHLEEQTPRTLLKNILLTAPESSILMPESVVKPVPAPQAVQPSRQESSCGSLELQLPELEPPTTLAPGLLAPGRRKQRLRLSVFQQGVDQGLSLSQEPQGNADASSLTRSLNLTFATPLQPQSVQRPGLARRPPARRAVDVGAFLRDLRDTSLAPPNIVLEDTQPFSQPMVGSPNVYHSLPCTPHTGAEDAEQAAGRKTQSSGPGLQKNSPGKPAQFLAGEAEEVNAFALGFLSTSSGVSGEDEVEPLHDGVEEAEKKMEEEGVSVSEMEATGAQGPSRVEEAEGHTEVTEAEGSQGTAEADGPGASSGDEDASGRAASPESASSTPESLQARRHHQFLEPAPAPGAAVLSSEPAEPLLVRHPPRPRTTGPRPRQDPHKAGLSHYVKLFSFYAKMPMERKALEMVEKCLDKYFQHLCDDLEVFAAHAGRKTVKPEDLELLMRRQGLVTDQVSLHVLVERHLPLEYRQLLIPCAYSGNSVFPAQ</sequence>
<feature type="chain" id="PRO_0000249514" description="Centromere protein T">
    <location>
        <begin position="1"/>
        <end position="561"/>
    </location>
</feature>
<feature type="region of interest" description="Disordered" evidence="3">
    <location>
        <begin position="1"/>
        <end position="83"/>
    </location>
</feature>
<feature type="region of interest" description="Flexible stalk domain" evidence="1">
    <location>
        <begin position="93"/>
        <end position="421"/>
    </location>
</feature>
<feature type="region of interest" description="Disordered" evidence="3">
    <location>
        <begin position="256"/>
        <end position="292"/>
    </location>
</feature>
<feature type="region of interest" description="Disordered" evidence="3">
    <location>
        <begin position="333"/>
        <end position="457"/>
    </location>
</feature>
<feature type="compositionally biased region" description="Basic and acidic residues" evidence="3">
    <location>
        <begin position="18"/>
        <end position="27"/>
    </location>
</feature>
<feature type="compositionally biased region" description="Low complexity" evidence="3">
    <location>
        <begin position="34"/>
        <end position="46"/>
    </location>
</feature>
<feature type="compositionally biased region" description="Polar residues" evidence="3">
    <location>
        <begin position="276"/>
        <end position="288"/>
    </location>
</feature>
<feature type="compositionally biased region" description="Basic and acidic residues" evidence="3">
    <location>
        <begin position="357"/>
        <end position="367"/>
    </location>
</feature>
<feature type="compositionally biased region" description="Low complexity" evidence="3">
    <location>
        <begin position="395"/>
        <end position="407"/>
    </location>
</feature>
<feature type="modified residue" description="Phosphoserine" evidence="9 20 21">
    <location>
        <position position="47"/>
    </location>
</feature>
<feature type="modified residue" description="Phosphothreonine" evidence="20">
    <location>
        <position position="85"/>
    </location>
</feature>
<feature type="modified residue" description="Phosphoserine" evidence="21">
    <location>
        <position position="343"/>
    </location>
</feature>
<feature type="modified residue" description="Phosphoserine" evidence="2">
    <location>
        <position position="345"/>
    </location>
</feature>
<feature type="modified residue" description="Phosphoserine" evidence="2">
    <location>
        <position position="356"/>
    </location>
</feature>
<feature type="modified residue" description="Phosphoserine" evidence="17">
    <location>
        <position position="373"/>
    </location>
</feature>
<feature type="modified residue" description="Phosphoserine" evidence="17">
    <location>
        <position position="385"/>
    </location>
</feature>
<feature type="modified residue" description="Phosphoserine" evidence="17">
    <location>
        <position position="386"/>
    </location>
</feature>
<feature type="modified residue" description="Phosphoserine" evidence="18 19 20 21">
    <location>
        <position position="397"/>
    </location>
</feature>
<feature type="splice variant" id="VSP_020455" description="In isoform 3." evidence="14">
    <original>SVGRSAHIQASGHLEEQTPRTLLKNILLTAPESSILMPESVVKPVPAPQAVQPSRQESSCGSLELQLPELEPPTTLAPGLLAPG</original>
    <variation>VSTQPTDPKGPWLPRGGGLRSSSALEPTLRKSQGRRTDWLLGASPIVCWQIGPYSGQWALGGTDTSDAAEEHPTNCPRIFHPDA</variation>
    <location>
        <begin position="68"/>
        <end position="151"/>
    </location>
</feature>
<feature type="splice variant" id="VSP_020456" description="In isoform 3." evidence="14">
    <location>
        <begin position="152"/>
        <end position="561"/>
    </location>
</feature>
<feature type="splice variant" id="VSP_020457" description="In isoform 2." evidence="14">
    <original>PGKPAQFLAGE</original>
    <variation>ECVALVAWSQI</variation>
    <location>
        <begin position="289"/>
        <end position="299"/>
    </location>
</feature>
<feature type="splice variant" id="VSP_020458" description="In isoform 2." evidence="14">
    <location>
        <begin position="300"/>
        <end position="561"/>
    </location>
</feature>
<feature type="sequence variant" id="VAR_027421" description="In dbSNP:rs12102580.">
    <original>P</original>
    <variation>L</variation>
    <location>
        <position position="115"/>
    </location>
</feature>
<feature type="helix" evidence="22">
    <location>
        <begin position="455"/>
        <end position="471"/>
    </location>
</feature>
<feature type="helix" evidence="22">
    <location>
        <begin position="479"/>
        <end position="505"/>
    </location>
</feature>
<feature type="helix" evidence="22">
    <location>
        <begin position="512"/>
        <end position="521"/>
    </location>
</feature>
<feature type="strand" evidence="22">
    <location>
        <begin position="527"/>
        <end position="529"/>
    </location>
</feature>
<feature type="helix" evidence="22">
    <location>
        <begin position="531"/>
        <end position="538"/>
    </location>
</feature>
<feature type="helix" evidence="22">
    <location>
        <begin position="541"/>
        <end position="547"/>
    </location>
</feature>
<feature type="strand" evidence="22">
    <location>
        <begin position="550"/>
        <end position="552"/>
    </location>
</feature>
<feature type="turn" evidence="22">
    <location>
        <begin position="553"/>
        <end position="555"/>
    </location>
</feature>
<feature type="strand" evidence="22">
    <location>
        <begin position="556"/>
        <end position="559"/>
    </location>
</feature>
<keyword id="KW-0002">3D-structure</keyword>
<keyword id="KW-0025">Alternative splicing</keyword>
<keyword id="KW-0131">Cell cycle</keyword>
<keyword id="KW-0132">Cell division</keyword>
<keyword id="KW-0137">Centromere</keyword>
<keyword id="KW-0158">Chromosome</keyword>
<keyword id="KW-0238">DNA-binding</keyword>
<keyword id="KW-0242">Dwarfism</keyword>
<keyword id="KW-0995">Kinetochore</keyword>
<keyword id="KW-0498">Mitosis</keyword>
<keyword id="KW-0539">Nucleus</keyword>
<keyword id="KW-0597">Phosphoprotein</keyword>
<keyword id="KW-1267">Proteomics identification</keyword>
<keyword id="KW-1185">Reference proteome</keyword>
<dbReference type="EMBL" id="AK023173">
    <property type="protein sequence ID" value="BAB14445.1"/>
    <property type="molecule type" value="mRNA"/>
</dbReference>
<dbReference type="EMBL" id="AK055237">
    <property type="protein sequence ID" value="BAB70884.1"/>
    <property type="molecule type" value="mRNA"/>
</dbReference>
<dbReference type="EMBL" id="BC007642">
    <property type="protein sequence ID" value="AAH07642.1"/>
    <property type="molecule type" value="mRNA"/>
</dbReference>
<dbReference type="EMBL" id="BC007864">
    <property type="protein sequence ID" value="AAH07864.2"/>
    <property type="molecule type" value="mRNA"/>
</dbReference>
<dbReference type="EMBL" id="BC015202">
    <property type="protein sequence ID" value="AAH15202.2"/>
    <property type="molecule type" value="mRNA"/>
</dbReference>
<dbReference type="CCDS" id="CCDS42182.1">
    <molecule id="Q96BT3-1"/>
</dbReference>
<dbReference type="RefSeq" id="NP_079358.3">
    <molecule id="Q96BT3-1"/>
    <property type="nucleotide sequence ID" value="NM_025082.4"/>
</dbReference>
<dbReference type="RefSeq" id="XP_047290642.1">
    <molecule id="Q96BT3-1"/>
    <property type="nucleotide sequence ID" value="XM_047434686.1"/>
</dbReference>
<dbReference type="RefSeq" id="XP_054169973.1">
    <molecule id="Q96BT3-1"/>
    <property type="nucleotide sequence ID" value="XM_054313998.1"/>
</dbReference>
<dbReference type="PDB" id="7QOO">
    <property type="method" value="EM"/>
    <property type="resolution" value="4.60 A"/>
    <property type="chains" value="T=1-561"/>
</dbReference>
<dbReference type="PDB" id="7R5S">
    <property type="method" value="EM"/>
    <property type="resolution" value="2.83 A"/>
    <property type="chains" value="T=1-561"/>
</dbReference>
<dbReference type="PDB" id="7XHN">
    <property type="method" value="EM"/>
    <property type="resolution" value="3.71 A"/>
    <property type="chains" value="T=1-561"/>
</dbReference>
<dbReference type="PDB" id="7XHO">
    <property type="method" value="EM"/>
    <property type="resolution" value="3.29 A"/>
    <property type="chains" value="T=1-561"/>
</dbReference>
<dbReference type="PDB" id="7YWX">
    <property type="method" value="EM"/>
    <property type="resolution" value="12.00 A"/>
    <property type="chains" value="T=1-561"/>
</dbReference>
<dbReference type="PDBsum" id="7QOO"/>
<dbReference type="PDBsum" id="7R5S"/>
<dbReference type="PDBsum" id="7XHN"/>
<dbReference type="PDBsum" id="7XHO"/>
<dbReference type="PDBsum" id="7YWX"/>
<dbReference type="EMDB" id="EMD-14098"/>
<dbReference type="EMDB" id="EMD-14336"/>
<dbReference type="EMDB" id="EMD-14351"/>
<dbReference type="EMDB" id="EMD-33196"/>
<dbReference type="EMDB" id="EMD-33197"/>
<dbReference type="SMR" id="Q96BT3"/>
<dbReference type="BioGRID" id="123143">
    <property type="interactions" value="36"/>
</dbReference>
<dbReference type="ComplexPortal" id="CPX-5646">
    <property type="entry name" value="Kinetochore CCAN complex"/>
</dbReference>
<dbReference type="CORUM" id="Q96BT3"/>
<dbReference type="FunCoup" id="Q96BT3">
    <property type="interactions" value="1559"/>
</dbReference>
<dbReference type="IntAct" id="Q96BT3">
    <property type="interactions" value="22"/>
</dbReference>
<dbReference type="MINT" id="Q96BT3"/>
<dbReference type="STRING" id="9606.ENSP00000457810"/>
<dbReference type="iPTMnet" id="Q96BT3"/>
<dbReference type="PhosphoSitePlus" id="Q96BT3"/>
<dbReference type="BioMuta" id="CENPT"/>
<dbReference type="DMDM" id="74760746"/>
<dbReference type="jPOST" id="Q96BT3"/>
<dbReference type="MassIVE" id="Q96BT3"/>
<dbReference type="PaxDb" id="9606-ENSP00000457810"/>
<dbReference type="PeptideAtlas" id="Q96BT3"/>
<dbReference type="ProteomicsDB" id="76109">
    <molecule id="Q96BT3-1"/>
</dbReference>
<dbReference type="ProteomicsDB" id="76110">
    <molecule id="Q96BT3-2"/>
</dbReference>
<dbReference type="ProteomicsDB" id="76111">
    <molecule id="Q96BT3-3"/>
</dbReference>
<dbReference type="Pumba" id="Q96BT3"/>
<dbReference type="Antibodypedia" id="29639">
    <property type="antibodies" value="97 antibodies from 23 providers"/>
</dbReference>
<dbReference type="DNASU" id="80152"/>
<dbReference type="Ensembl" id="ENST00000440851.6">
    <molecule id="Q96BT3-1"/>
    <property type="protein sequence ID" value="ENSP00000400140.2"/>
    <property type="gene ID" value="ENSG00000102901.13"/>
</dbReference>
<dbReference type="Ensembl" id="ENST00000562787.6">
    <molecule id="Q96BT3-1"/>
    <property type="protein sequence ID" value="ENSP00000457810.1"/>
    <property type="gene ID" value="ENSG00000102901.13"/>
</dbReference>
<dbReference type="GeneID" id="80152"/>
<dbReference type="KEGG" id="hsa:80152"/>
<dbReference type="MANE-Select" id="ENST00000562787.6">
    <property type="protein sequence ID" value="ENSP00000457810.1"/>
    <property type="RefSeq nucleotide sequence ID" value="NM_025082.4"/>
    <property type="RefSeq protein sequence ID" value="NP_079358.3"/>
</dbReference>
<dbReference type="UCSC" id="uc002eun.4">
    <molecule id="Q96BT3-1"/>
    <property type="organism name" value="human"/>
</dbReference>
<dbReference type="AGR" id="HGNC:25787"/>
<dbReference type="CTD" id="80152"/>
<dbReference type="DisGeNET" id="80152"/>
<dbReference type="GeneCards" id="CENPT"/>
<dbReference type="HGNC" id="HGNC:25787">
    <property type="gene designation" value="CENPT"/>
</dbReference>
<dbReference type="HPA" id="ENSG00000102901">
    <property type="expression patterns" value="Low tissue specificity"/>
</dbReference>
<dbReference type="MalaCards" id="CENPT"/>
<dbReference type="MIM" id="611510">
    <property type="type" value="gene"/>
</dbReference>
<dbReference type="MIM" id="618702">
    <property type="type" value="phenotype"/>
</dbReference>
<dbReference type="neXtProt" id="NX_Q96BT3"/>
<dbReference type="OpenTargets" id="ENSG00000102901"/>
<dbReference type="PharmGKB" id="PA142672263"/>
<dbReference type="VEuPathDB" id="HostDB:ENSG00000102901"/>
<dbReference type="eggNOG" id="ENOG502RZH1">
    <property type="taxonomic scope" value="Eukaryota"/>
</dbReference>
<dbReference type="GeneTree" id="ENSGT00390000003044"/>
<dbReference type="InParanoid" id="Q96BT3"/>
<dbReference type="OMA" id="YFQHLCN"/>
<dbReference type="OrthoDB" id="10071681at2759"/>
<dbReference type="PAN-GO" id="Q96BT3">
    <property type="GO annotations" value="2 GO annotations based on evolutionary models"/>
</dbReference>
<dbReference type="PhylomeDB" id="Q96BT3"/>
<dbReference type="TreeFam" id="TF332946"/>
<dbReference type="PathwayCommons" id="Q96BT3"/>
<dbReference type="Reactome" id="R-HSA-141444">
    <property type="pathway name" value="Amplification of signal from unattached kinetochores via a MAD2 inhibitory signal"/>
</dbReference>
<dbReference type="Reactome" id="R-HSA-2467813">
    <property type="pathway name" value="Separation of Sister Chromatids"/>
</dbReference>
<dbReference type="Reactome" id="R-HSA-2500257">
    <property type="pathway name" value="Resolution of Sister Chromatid Cohesion"/>
</dbReference>
<dbReference type="Reactome" id="R-HSA-5663220">
    <property type="pathway name" value="RHO GTPases Activate Formins"/>
</dbReference>
<dbReference type="Reactome" id="R-HSA-606279">
    <property type="pathway name" value="Deposition of new CENPA-containing nucleosomes at the centromere"/>
</dbReference>
<dbReference type="Reactome" id="R-HSA-68877">
    <property type="pathway name" value="Mitotic Prometaphase"/>
</dbReference>
<dbReference type="Reactome" id="R-HSA-9648025">
    <property type="pathway name" value="EML4 and NUDC in mitotic spindle formation"/>
</dbReference>
<dbReference type="SignaLink" id="Q96BT3"/>
<dbReference type="SIGNOR" id="Q96BT3"/>
<dbReference type="BioGRID-ORCS" id="80152">
    <property type="hits" value="508 hits in 1158 CRISPR screens"/>
</dbReference>
<dbReference type="ChiTaRS" id="CENPT">
    <property type="organism name" value="human"/>
</dbReference>
<dbReference type="GeneWiki" id="CENPT"/>
<dbReference type="GenomeRNAi" id="80152"/>
<dbReference type="Pharos" id="Q96BT3">
    <property type="development level" value="Tbio"/>
</dbReference>
<dbReference type="PRO" id="PR:Q96BT3"/>
<dbReference type="Proteomes" id="UP000005640">
    <property type="component" value="Chromosome 16"/>
</dbReference>
<dbReference type="RNAct" id="Q96BT3">
    <property type="molecule type" value="protein"/>
</dbReference>
<dbReference type="Bgee" id="ENSG00000102901">
    <property type="expression patterns" value="Expressed in right hemisphere of cerebellum and 105 other cell types or tissues"/>
</dbReference>
<dbReference type="ExpressionAtlas" id="Q96BT3">
    <property type="expression patterns" value="baseline and differential"/>
</dbReference>
<dbReference type="GO" id="GO:0000775">
    <property type="term" value="C:chromosome, centromeric region"/>
    <property type="evidence" value="ECO:0000314"/>
    <property type="project" value="UniProtKB"/>
</dbReference>
<dbReference type="GO" id="GO:0005829">
    <property type="term" value="C:cytosol"/>
    <property type="evidence" value="ECO:0000304"/>
    <property type="project" value="Reactome"/>
</dbReference>
<dbReference type="GO" id="GO:0000939">
    <property type="term" value="C:inner kinetochore"/>
    <property type="evidence" value="ECO:0000353"/>
    <property type="project" value="ComplexPortal"/>
</dbReference>
<dbReference type="GO" id="GO:0000776">
    <property type="term" value="C:kinetochore"/>
    <property type="evidence" value="ECO:0000314"/>
    <property type="project" value="UniProtKB"/>
</dbReference>
<dbReference type="GO" id="GO:0016604">
    <property type="term" value="C:nuclear body"/>
    <property type="evidence" value="ECO:0000314"/>
    <property type="project" value="HPA"/>
</dbReference>
<dbReference type="GO" id="GO:0005654">
    <property type="term" value="C:nucleoplasm"/>
    <property type="evidence" value="ECO:0000314"/>
    <property type="project" value="HPA"/>
</dbReference>
<dbReference type="GO" id="GO:0005634">
    <property type="term" value="C:nucleus"/>
    <property type="evidence" value="ECO:0000303"/>
    <property type="project" value="ComplexPortal"/>
</dbReference>
<dbReference type="GO" id="GO:0003677">
    <property type="term" value="F:DNA binding"/>
    <property type="evidence" value="ECO:0007669"/>
    <property type="project" value="UniProtKB-KW"/>
</dbReference>
<dbReference type="GO" id="GO:0046982">
    <property type="term" value="F:protein heterodimerization activity"/>
    <property type="evidence" value="ECO:0007669"/>
    <property type="project" value="InterPro"/>
</dbReference>
<dbReference type="GO" id="GO:0051301">
    <property type="term" value="P:cell division"/>
    <property type="evidence" value="ECO:0007669"/>
    <property type="project" value="UniProtKB-KW"/>
</dbReference>
<dbReference type="GO" id="GO:0051276">
    <property type="term" value="P:chromosome organization"/>
    <property type="evidence" value="ECO:0000315"/>
    <property type="project" value="UniProtKB"/>
</dbReference>
<dbReference type="GO" id="GO:0007059">
    <property type="term" value="P:chromosome segregation"/>
    <property type="evidence" value="ECO:0000315"/>
    <property type="project" value="UniProtKB"/>
</dbReference>
<dbReference type="GO" id="GO:0051382">
    <property type="term" value="P:kinetochore assembly"/>
    <property type="evidence" value="ECO:0000315"/>
    <property type="project" value="UniProtKB"/>
</dbReference>
<dbReference type="GO" id="GO:0000278">
    <property type="term" value="P:mitotic cell cycle"/>
    <property type="evidence" value="ECO:0000315"/>
    <property type="project" value="UniProtKB"/>
</dbReference>
<dbReference type="CDD" id="cd22920">
    <property type="entry name" value="HFD_CENP-T"/>
    <property type="match status" value="1"/>
</dbReference>
<dbReference type="FunFam" id="1.10.20.10:FF:000050">
    <property type="entry name" value="centromere protein T isoform X2"/>
    <property type="match status" value="1"/>
</dbReference>
<dbReference type="Gene3D" id="1.10.20.10">
    <property type="entry name" value="Histone, subunit A"/>
    <property type="match status" value="1"/>
</dbReference>
<dbReference type="InterPro" id="IPR028255">
    <property type="entry name" value="CENP-T"/>
</dbReference>
<dbReference type="InterPro" id="IPR035425">
    <property type="entry name" value="CENP-T/H4_C"/>
</dbReference>
<dbReference type="InterPro" id="IPR032373">
    <property type="entry name" value="CENP-T_N"/>
</dbReference>
<dbReference type="InterPro" id="IPR009072">
    <property type="entry name" value="Histone-fold"/>
</dbReference>
<dbReference type="PANTHER" id="PTHR46904">
    <property type="entry name" value="CENTROMERE PROTEIN T"/>
    <property type="match status" value="1"/>
</dbReference>
<dbReference type="PANTHER" id="PTHR46904:SF1">
    <property type="entry name" value="CENTROMERE PROTEIN T"/>
    <property type="match status" value="1"/>
</dbReference>
<dbReference type="Pfam" id="PF15511">
    <property type="entry name" value="CENP-T_C"/>
    <property type="match status" value="1"/>
</dbReference>
<dbReference type="Pfam" id="PF16171">
    <property type="entry name" value="CENP-T_N"/>
    <property type="match status" value="1"/>
</dbReference>
<dbReference type="SUPFAM" id="SSF47113">
    <property type="entry name" value="Histone-fold"/>
    <property type="match status" value="1"/>
</dbReference>
<gene>
    <name type="primary">CENPT</name>
    <name type="synonym">C16orf56</name>
    <name type="synonym">ICEN22</name>
</gene>
<reference key="1">
    <citation type="journal article" date="2004" name="Nat. Genet.">
        <title>Complete sequencing and characterization of 21,243 full-length human cDNAs.</title>
        <authorList>
            <person name="Ota T."/>
            <person name="Suzuki Y."/>
            <person name="Nishikawa T."/>
            <person name="Otsuki T."/>
            <person name="Sugiyama T."/>
            <person name="Irie R."/>
            <person name="Wakamatsu A."/>
            <person name="Hayashi K."/>
            <person name="Sato H."/>
            <person name="Nagai K."/>
            <person name="Kimura K."/>
            <person name="Makita H."/>
            <person name="Sekine M."/>
            <person name="Obayashi M."/>
            <person name="Nishi T."/>
            <person name="Shibahara T."/>
            <person name="Tanaka T."/>
            <person name="Ishii S."/>
            <person name="Yamamoto J."/>
            <person name="Saito K."/>
            <person name="Kawai Y."/>
            <person name="Isono Y."/>
            <person name="Nakamura Y."/>
            <person name="Nagahari K."/>
            <person name="Murakami K."/>
            <person name="Yasuda T."/>
            <person name="Iwayanagi T."/>
            <person name="Wagatsuma M."/>
            <person name="Shiratori A."/>
            <person name="Sudo H."/>
            <person name="Hosoiri T."/>
            <person name="Kaku Y."/>
            <person name="Kodaira H."/>
            <person name="Kondo H."/>
            <person name="Sugawara M."/>
            <person name="Takahashi M."/>
            <person name="Kanda K."/>
            <person name="Yokoi T."/>
            <person name="Furuya T."/>
            <person name="Kikkawa E."/>
            <person name="Omura Y."/>
            <person name="Abe K."/>
            <person name="Kamihara K."/>
            <person name="Katsuta N."/>
            <person name="Sato K."/>
            <person name="Tanikawa M."/>
            <person name="Yamazaki M."/>
            <person name="Ninomiya K."/>
            <person name="Ishibashi T."/>
            <person name="Yamashita H."/>
            <person name="Murakawa K."/>
            <person name="Fujimori K."/>
            <person name="Tanai H."/>
            <person name="Kimata M."/>
            <person name="Watanabe M."/>
            <person name="Hiraoka S."/>
            <person name="Chiba Y."/>
            <person name="Ishida S."/>
            <person name="Ono Y."/>
            <person name="Takiguchi S."/>
            <person name="Watanabe S."/>
            <person name="Yosida M."/>
            <person name="Hotuta T."/>
            <person name="Kusano J."/>
            <person name="Kanehori K."/>
            <person name="Takahashi-Fujii A."/>
            <person name="Hara H."/>
            <person name="Tanase T.-O."/>
            <person name="Nomura Y."/>
            <person name="Togiya S."/>
            <person name="Komai F."/>
            <person name="Hara R."/>
            <person name="Takeuchi K."/>
            <person name="Arita M."/>
            <person name="Imose N."/>
            <person name="Musashino K."/>
            <person name="Yuuki H."/>
            <person name="Oshima A."/>
            <person name="Sasaki N."/>
            <person name="Aotsuka S."/>
            <person name="Yoshikawa Y."/>
            <person name="Matsunawa H."/>
            <person name="Ichihara T."/>
            <person name="Shiohata N."/>
            <person name="Sano S."/>
            <person name="Moriya S."/>
            <person name="Momiyama H."/>
            <person name="Satoh N."/>
            <person name="Takami S."/>
            <person name="Terashima Y."/>
            <person name="Suzuki O."/>
            <person name="Nakagawa S."/>
            <person name="Senoh A."/>
            <person name="Mizoguchi H."/>
            <person name="Goto Y."/>
            <person name="Shimizu F."/>
            <person name="Wakebe H."/>
            <person name="Hishigaki H."/>
            <person name="Watanabe T."/>
            <person name="Sugiyama A."/>
            <person name="Takemoto M."/>
            <person name="Kawakami B."/>
            <person name="Yamazaki M."/>
            <person name="Watanabe K."/>
            <person name="Kumagai A."/>
            <person name="Itakura S."/>
            <person name="Fukuzumi Y."/>
            <person name="Fujimori Y."/>
            <person name="Komiyama M."/>
            <person name="Tashiro H."/>
            <person name="Tanigami A."/>
            <person name="Fujiwara T."/>
            <person name="Ono T."/>
            <person name="Yamada K."/>
            <person name="Fujii Y."/>
            <person name="Ozaki K."/>
            <person name="Hirao M."/>
            <person name="Ohmori Y."/>
            <person name="Kawabata A."/>
            <person name="Hikiji T."/>
            <person name="Kobatake N."/>
            <person name="Inagaki H."/>
            <person name="Ikema Y."/>
            <person name="Okamoto S."/>
            <person name="Okitani R."/>
            <person name="Kawakami T."/>
            <person name="Noguchi S."/>
            <person name="Itoh T."/>
            <person name="Shigeta K."/>
            <person name="Senba T."/>
            <person name="Matsumura K."/>
            <person name="Nakajima Y."/>
            <person name="Mizuno T."/>
            <person name="Morinaga M."/>
            <person name="Sasaki M."/>
            <person name="Togashi T."/>
            <person name="Oyama M."/>
            <person name="Hata H."/>
            <person name="Watanabe M."/>
            <person name="Komatsu T."/>
            <person name="Mizushima-Sugano J."/>
            <person name="Satoh T."/>
            <person name="Shirai Y."/>
            <person name="Takahashi Y."/>
            <person name="Nakagawa K."/>
            <person name="Okumura K."/>
            <person name="Nagase T."/>
            <person name="Nomura N."/>
            <person name="Kikuchi H."/>
            <person name="Masuho Y."/>
            <person name="Yamashita R."/>
            <person name="Nakai K."/>
            <person name="Yada T."/>
            <person name="Nakamura Y."/>
            <person name="Ohara O."/>
            <person name="Isogai T."/>
            <person name="Sugano S."/>
        </authorList>
    </citation>
    <scope>NUCLEOTIDE SEQUENCE [LARGE SCALE MRNA] (ISOFORMS 2 AND 3)</scope>
    <source>
        <tissue>Brain</tissue>
        <tissue>Lung</tissue>
    </source>
</reference>
<reference key="2">
    <citation type="journal article" date="2004" name="Genome Res.">
        <title>The status, quality, and expansion of the NIH full-length cDNA project: the Mammalian Gene Collection (MGC).</title>
        <authorList>
            <consortium name="The MGC Project Team"/>
        </authorList>
    </citation>
    <scope>NUCLEOTIDE SEQUENCE [LARGE SCALE MRNA] (ISOFORM 1)</scope>
    <source>
        <tissue>Lung</tissue>
        <tissue>Uterus</tissue>
    </source>
</reference>
<reference key="3">
    <citation type="journal article" date="2006" name="Genes Cells">
        <title>Comprehensive analysis of the ICEN (Interphase Centromere Complex) components enriched in the CENP-A chromatin of human cells.</title>
        <authorList>
            <person name="Izuta H."/>
            <person name="Ikeno M."/>
            <person name="Suzuki N."/>
            <person name="Tomonaga T."/>
            <person name="Nozaki N."/>
            <person name="Obuse C."/>
            <person name="Kisu Y."/>
            <person name="Goshima N."/>
            <person name="Nomura F."/>
            <person name="Nomura N."/>
            <person name="Yoda K."/>
        </authorList>
    </citation>
    <scope>FUNCTION</scope>
    <scope>SUBCELLULAR LOCATION</scope>
</reference>
<reference key="4">
    <citation type="journal article" date="2006" name="Nat. Cell Biol.">
        <title>The human CENP-A centromeric nucleosome-associated complex.</title>
        <authorList>
            <person name="Foltz D.R."/>
            <person name="Jansen L.E.T."/>
            <person name="Black B.E."/>
            <person name="Bailey A.O."/>
            <person name="Yates J.R. III"/>
            <person name="Cleveland D.W."/>
        </authorList>
    </citation>
    <scope>IDENTIFICATION IN THE CENPA-NAC COMPLEX WITH CENPA; CENPC; CENPH; CENPM; CENPN AND CENPU</scope>
</reference>
<reference key="5">
    <citation type="journal article" date="2007" name="Science">
        <title>ATM and ATR substrate analysis reveals extensive protein networks responsive to DNA damage.</title>
        <authorList>
            <person name="Matsuoka S."/>
            <person name="Ballif B.A."/>
            <person name="Smogorzewska A."/>
            <person name="McDonald E.R. III"/>
            <person name="Hurov K.E."/>
            <person name="Luo J."/>
            <person name="Bakalarski C.E."/>
            <person name="Zhao Z."/>
            <person name="Solimini N."/>
            <person name="Lerenthal Y."/>
            <person name="Shiloh Y."/>
            <person name="Gygi S.P."/>
            <person name="Elledge S.J."/>
        </authorList>
    </citation>
    <scope>PHOSPHORYLATION [LARGE SCALE ANALYSIS] AT SER-373; SER-385 AND SER-386</scope>
    <scope>IDENTIFICATION BY MASS SPECTROMETRY [LARGE SCALE ANALYSIS]</scope>
    <source>
        <tissue>Embryonic kidney</tissue>
    </source>
</reference>
<reference key="6">
    <citation type="journal article" date="2008" name="Proc. Natl. Acad. Sci. U.S.A.">
        <title>A quantitative atlas of mitotic phosphorylation.</title>
        <authorList>
            <person name="Dephoure N."/>
            <person name="Zhou C."/>
            <person name="Villen J."/>
            <person name="Beausoleil S.A."/>
            <person name="Bakalarski C.E."/>
            <person name="Elledge S.J."/>
            <person name="Gygi S.P."/>
        </authorList>
    </citation>
    <scope>PHOSPHORYLATION [LARGE SCALE ANALYSIS] AT SER-397</scope>
    <scope>IDENTIFICATION BY MASS SPECTROMETRY [LARGE SCALE ANALYSIS]</scope>
    <source>
        <tissue>Cervix carcinoma</tissue>
    </source>
</reference>
<reference key="7">
    <citation type="journal article" date="2009" name="Anal. Chem.">
        <title>Lys-N and trypsin cover complementary parts of the phosphoproteome in a refined SCX-based approach.</title>
        <authorList>
            <person name="Gauci S."/>
            <person name="Helbig A.O."/>
            <person name="Slijper M."/>
            <person name="Krijgsveld J."/>
            <person name="Heck A.J."/>
            <person name="Mohammed S."/>
        </authorList>
    </citation>
    <scope>IDENTIFICATION BY MASS SPECTROMETRY [LARGE SCALE ANALYSIS]</scope>
</reference>
<reference key="8">
    <citation type="journal article" date="2009" name="Mol. Cells">
        <title>Cancer-upregulated gene 2 (CUG2), a new component of centromere complex, is required for kinetochore function.</title>
        <authorList>
            <person name="Kim H."/>
            <person name="Lee M."/>
            <person name="Lee S."/>
            <person name="Park B."/>
            <person name="Koh W."/>
            <person name="Lee D.J."/>
            <person name="Lim D.S."/>
            <person name="Lee S."/>
        </authorList>
    </citation>
    <scope>IDENTIFICATION IN COMPLEX WITH CENPA AND CENPW</scope>
</reference>
<reference key="9">
    <citation type="journal article" date="2008" name="Cell">
        <title>CCAN makes multiple contacts with centromeric DNA to provide distinct pathways to the outer kinetochore.</title>
        <authorList>
            <person name="Hori T."/>
            <person name="Amano M."/>
            <person name="Suzuki A."/>
            <person name="Backer C.B."/>
            <person name="Welburn J.P."/>
            <person name="Dong Y."/>
            <person name="McEwen B.F."/>
            <person name="Shang W.-H."/>
            <person name="Suzuki E."/>
            <person name="Okawa K."/>
            <person name="Cheeseman I.M."/>
            <person name="Fukagawa T."/>
        </authorList>
    </citation>
    <scope>SUBCELLULAR LOCATION</scope>
    <scope>INTERACTION WITH CENPW</scope>
</reference>
<reference key="10">
    <citation type="journal article" date="2008" name="J. Biophotonics">
        <title>Live-cell imaging reveals sustained centromere binding of CENP-T via CENP-A and CENP-B.</title>
        <authorList>
            <person name="Hellwig D."/>
            <person name="Muench S."/>
            <person name="Orthaus S."/>
            <person name="Hoischen C."/>
            <person name="Hemmerich P."/>
            <person name="Diekmann S."/>
        </authorList>
    </citation>
    <scope>SUBCELLULAR LOCATION</scope>
    <scope>INTERACTION WITH CENPA AND CENPB</scope>
</reference>
<reference key="11">
    <citation type="journal article" date="2009" name="Sci. Signal.">
        <title>Quantitative phosphoproteomic analysis of T cell receptor signaling reveals system-wide modulation of protein-protein interactions.</title>
        <authorList>
            <person name="Mayya V."/>
            <person name="Lundgren D.H."/>
            <person name="Hwang S.-I."/>
            <person name="Rezaul K."/>
            <person name="Wu L."/>
            <person name="Eng J.K."/>
            <person name="Rodionov V."/>
            <person name="Han D.K."/>
        </authorList>
    </citation>
    <scope>PHOSPHORYLATION [LARGE SCALE ANALYSIS] AT SER-397</scope>
    <scope>IDENTIFICATION BY MASS SPECTROMETRY [LARGE SCALE ANALYSIS]</scope>
    <source>
        <tissue>Leukemic T-cell</tissue>
    </source>
</reference>
<reference key="12">
    <citation type="journal article" date="2010" name="Sci. Signal.">
        <title>Quantitative phosphoproteomics reveals widespread full phosphorylation site occupancy during mitosis.</title>
        <authorList>
            <person name="Olsen J.V."/>
            <person name="Vermeulen M."/>
            <person name="Santamaria A."/>
            <person name="Kumar C."/>
            <person name="Miller M.L."/>
            <person name="Jensen L.J."/>
            <person name="Gnad F."/>
            <person name="Cox J."/>
            <person name="Jensen T.S."/>
            <person name="Nigg E.A."/>
            <person name="Brunak S."/>
            <person name="Mann M."/>
        </authorList>
    </citation>
    <scope>PHOSPHORYLATION [LARGE SCALE ANALYSIS] AT SER-47; THR-85 AND SER-397</scope>
    <scope>IDENTIFICATION BY MASS SPECTROMETRY [LARGE SCALE ANALYSIS]</scope>
    <source>
        <tissue>Cervix carcinoma</tissue>
    </source>
</reference>
<reference key="13">
    <citation type="journal article" date="2011" name="Cell">
        <title>Induced ectopic kinetochore assembly bypasses the requirement for CENP-A nucleosomes.</title>
        <authorList>
            <person name="Gascoigne K.E."/>
            <person name="Takeuchi K."/>
            <person name="Suzuki A."/>
            <person name="Hori T."/>
            <person name="Fukagawa T."/>
            <person name="Cheeseman I.M."/>
        </authorList>
    </citation>
    <scope>FUNCTION</scope>
    <scope>SUBCELLULAR LOCATION</scope>
    <scope>INTERACTION WITH CENPW</scope>
    <scope>POSSIBLE INTERACTION WITH THE NDC80 COMPLEX</scope>
    <scope>PHOSPHORYLATION AT SER-47</scope>
</reference>
<reference key="14">
    <citation type="journal article" date="2011" name="PLoS Biol.">
        <title>Premitotic assembly of human CENPs -T and -W switches centromeric chromatin to a mitotic state.</title>
        <authorList>
            <person name="Prendergast L."/>
            <person name="van Vuuren C."/>
            <person name="Kaczmarczyk A."/>
            <person name="Doering V."/>
            <person name="Hellwig D."/>
            <person name="Quinn N."/>
            <person name="Hoischen C."/>
            <person name="Diekmann S."/>
            <person name="Sullivan K.F."/>
        </authorList>
    </citation>
    <scope>FUNCTION</scope>
    <scope>IDENTIFICATION IN A COMPLEX WITH HISTONE H3</scope>
    <scope>INTERACTION WITH CENPW</scope>
    <scope>SUBCELLULAR LOCATION</scope>
</reference>
<reference key="15">
    <citation type="journal article" date="2012" name="Cell">
        <title>CENP-T-W-S-X forms a unique centromeric chromatin structure with a histone-like fold.</title>
        <authorList>
            <person name="Nishino T."/>
            <person name="Takeuchi K."/>
            <person name="Gascoigne K.E."/>
            <person name="Suzuki A."/>
            <person name="Hori T."/>
            <person name="Oyama T."/>
            <person name="Morikawa K."/>
            <person name="Cheeseman I.M."/>
            <person name="Fukagawa T."/>
        </authorList>
    </citation>
    <scope>SUBCELLULAR LOCATION</scope>
    <scope>INTERACTION WITH CENPS; CENPW AND CEPNX</scope>
</reference>
<reference key="16">
    <citation type="journal article" date="2013" name="J. Proteome Res.">
        <title>Toward a comprehensive characterization of a human cancer cell phosphoproteome.</title>
        <authorList>
            <person name="Zhou H."/>
            <person name="Di Palma S."/>
            <person name="Preisinger C."/>
            <person name="Peng M."/>
            <person name="Polat A.N."/>
            <person name="Heck A.J."/>
            <person name="Mohammed S."/>
        </authorList>
    </citation>
    <scope>PHOSPHORYLATION [LARGE SCALE ANALYSIS] AT SER-47; SER-343 AND SER-397</scope>
    <scope>IDENTIFICATION BY MASS SPECTROMETRY [LARGE SCALE ANALYSIS]</scope>
    <source>
        <tissue>Cervix carcinoma</tissue>
        <tissue>Erythroleukemia</tissue>
    </source>
</reference>
<reference key="17">
    <citation type="journal article" date="2016" name="Mol. Cell">
        <title>The flexible ends of CENP-A nucleosome are required for mitotic fidelity.</title>
        <authorList>
            <person name="Roulland Y."/>
            <person name="Ouararhni K."/>
            <person name="Naidenov M."/>
            <person name="Ramos L."/>
            <person name="Shuaib M."/>
            <person name="Syed S.H."/>
            <person name="Lone I.N."/>
            <person name="Boopathi R."/>
            <person name="Fontaine E."/>
            <person name="Papai G."/>
            <person name="Tachiwana H."/>
            <person name="Gautier T."/>
            <person name="Skoufias D."/>
            <person name="Padmanabhan K."/>
            <person name="Bednar J."/>
            <person name="Kurumizaka H."/>
            <person name="Schultz P."/>
            <person name="Angelov D."/>
            <person name="Hamiche A."/>
            <person name="Dimitrov S."/>
        </authorList>
    </citation>
    <scope>IDENTIFICATION IN A CENTROMERIC COMPLEX</scope>
</reference>
<reference key="18">
    <citation type="journal article" date="2017" name="PLoS ONE">
        <title>A defect in the inner kinetochore protein CENPT causes a new syndrome of severe growth failure.</title>
        <authorList>
            <person name="Hung C.Y."/>
            <person name="Volkmar B."/>
            <person name="Baker J.D."/>
            <person name="Bauer J.W."/>
            <person name="Gussoni E."/>
            <person name="Hainzl S."/>
            <person name="Klausegger A."/>
            <person name="Lorenzo J."/>
            <person name="Mihalek I."/>
            <person name="Rittinger O."/>
            <person name="Tekin M."/>
            <person name="Dallman J.E."/>
            <person name="Bodamer O.A."/>
        </authorList>
    </citation>
    <scope>INVOLVEMENT IN SSMGA</scope>
</reference>
<protein>
    <recommendedName>
        <fullName>Centromere protein T</fullName>
        <shortName>CENP-T</shortName>
    </recommendedName>
    <alternativeName>
        <fullName>Interphase centromere complex protein 22</fullName>
    </alternativeName>
</protein>
<evidence type="ECO:0000250" key="1"/>
<evidence type="ECO:0000250" key="2">
    <source>
        <dbReference type="UniProtKB" id="Q561R1"/>
    </source>
</evidence>
<evidence type="ECO:0000256" key="3">
    <source>
        <dbReference type="SAM" id="MobiDB-lite"/>
    </source>
</evidence>
<evidence type="ECO:0000269" key="4">
    <source>
    </source>
</evidence>
<evidence type="ECO:0000269" key="5">
    <source>
    </source>
</evidence>
<evidence type="ECO:0000269" key="6">
    <source>
    </source>
</evidence>
<evidence type="ECO:0000269" key="7">
    <source>
    </source>
</evidence>
<evidence type="ECO:0000269" key="8">
    <source>
    </source>
</evidence>
<evidence type="ECO:0000269" key="9">
    <source>
    </source>
</evidence>
<evidence type="ECO:0000269" key="10">
    <source>
    </source>
</evidence>
<evidence type="ECO:0000269" key="11">
    <source>
    </source>
</evidence>
<evidence type="ECO:0000269" key="12">
    <source>
    </source>
</evidence>
<evidence type="ECO:0000269" key="13">
    <source>
    </source>
</evidence>
<evidence type="ECO:0000303" key="14">
    <source>
    </source>
</evidence>
<evidence type="ECO:0000305" key="15"/>
<evidence type="ECO:0000305" key="16">
    <source>
    </source>
</evidence>
<evidence type="ECO:0007744" key="17">
    <source>
    </source>
</evidence>
<evidence type="ECO:0007744" key="18">
    <source>
    </source>
</evidence>
<evidence type="ECO:0007744" key="19">
    <source>
    </source>
</evidence>
<evidence type="ECO:0007744" key="20">
    <source>
    </source>
</evidence>
<evidence type="ECO:0007744" key="21">
    <source>
    </source>
</evidence>
<evidence type="ECO:0007829" key="22">
    <source>
        <dbReference type="PDB" id="7R5S"/>
    </source>
</evidence>
<comment type="function">
    <text evidence="5 9 10">Component of the CENPA-NAC (nucleosome-associated) complex, a complex that plays a central role in assembly of kinetochore proteins, mitotic progression and chromosome segregation. The CENPA-NAC complex recruits the CENPA-CAD (nucleosome distal) complex and may be involved in incorporation of newly synthesized CENPA into centromeres. Part of a nucleosome-associated complex that binds specifically to histone H3-containing nucleosomes at the centromere, as opposed to nucleosomes containing CENPA. Component of the heterotetrameric CENP-T-W-S-X complex that binds and supercoils DNA, and plays an important role in kinetochore assembly. CENPT has a fundamental role in kinetochore assembly and function. It is one of the inner kinetochore proteins, with most further proteins binding downstream. Required for normal chromosome organization and normal progress through mitosis.</text>
</comment>
<comment type="subunit">
    <text evidence="4 6 7 8 9 10 11 12 16">Component of the CENPA-CAD complex, composed of CENPI, CENPK, CENPL, CENPO, CENPP, CENPQ, CENPR and CENPS. The CENPA-CAD complex is probably recruited on centromeres by the CENPA-NAC complex, at least composed of CENPA, CENPC, CENPH, CENPM, CENPN, CENPT and CENPU (PubMed:16622419, PubMed:19412974, PubMed:19533040). Identified in a centromeric complex containing histones H2A, H2B, H3 and H4, and at least CENPA, CENPB, CENPC, CENPT, CENPN, HJURP, SUPT16H, SSRP1 and RSF1 (PubMed:19412974, PubMed:21695110, PubMed:27499292). Interacts (via N-terminus) with the NDC80 complex (Probable). Heterodimer with CENPW; this dimer coassembles with CENPS-CENPX heterodimers at centromeres to form the tetrameric CENP-T-W-S-X complex (PubMed:19070575, PubMed:19533040, PubMed:21529714, PubMed:21695110, PubMed:22304917).</text>
</comment>
<comment type="interaction">
    <interactant intactId="EBI-719918">
        <id>Q96BT3</id>
    </interactant>
    <interactant intactId="EBI-5529625">
        <id>Q5EE01</id>
        <label>CENPW</label>
    </interactant>
    <organismsDiffer>false</organismsDiffer>
    <experiments>7</experiments>
</comment>
<comment type="subcellular location">
    <subcellularLocation>
        <location>Nucleus</location>
    </subcellularLocation>
    <subcellularLocation>
        <location evidence="5 6 7">Chromosome</location>
        <location evidence="5 6 7">Centromere</location>
    </subcellularLocation>
    <subcellularLocation>
        <location evidence="7">Chromosome</location>
        <location evidence="7">Centromere</location>
        <location evidence="7">Kinetochore</location>
    </subcellularLocation>
    <text evidence="7">Constitutively localizes to centromeres throughout the cell cycle, and to kinetochores during mitosis. Localizes to the inner kinetochore, and may connect it to the outer kinetochore via its N-terminus.</text>
</comment>
<comment type="alternative products">
    <event type="alternative splicing"/>
    <isoform>
        <id>Q96BT3-1</id>
        <name>1</name>
        <sequence type="displayed"/>
    </isoform>
    <isoform>
        <id>Q96BT3-2</id>
        <name>2</name>
        <sequence type="described" ref="VSP_020457 VSP_020458"/>
    </isoform>
    <isoform>
        <id>Q96BT3-3</id>
        <name>3</name>
        <sequence type="described" ref="VSP_020455 VSP_020456"/>
    </isoform>
</comment>
<comment type="domain">
    <text evidence="1">The largest part of the sequence forms an elongated and flexible stalk structure that is connected to a C-terminal globular domain with a histone-type fold.</text>
</comment>
<comment type="PTM">
    <text evidence="9">Dynamically phosphorylated at Ser-47 and probably also other sites during the cell cycle. Phosphorylated at Ser-47 during G2 phase, metaphase and anaphase, but not during telophase or G1 phase.</text>
</comment>
<comment type="disease" evidence="13">
    <disease id="DI-05717">
        <name>Short stature and microcephaly with genital anomalies</name>
        <acronym>SSMGA</acronym>
        <description>An autosomal recessive disease characterized by growth failure resulting in severe short stature, severe microcephaly, and delayed and dissociated bone age. Additional features include global psychomotor developmental delay, pubertal delay and genital anomalies.</description>
        <dbReference type="MIM" id="618702"/>
    </disease>
    <text>The disease may be caused by variants affecting the gene represented in this entry.</text>
</comment>
<comment type="similarity">
    <text evidence="15">Belongs to the CENP-T/CNN1 family.</text>
</comment>
<organism>
    <name type="scientific">Homo sapiens</name>
    <name type="common">Human</name>
    <dbReference type="NCBI Taxonomy" id="9606"/>
    <lineage>
        <taxon>Eukaryota</taxon>
        <taxon>Metazoa</taxon>
        <taxon>Chordata</taxon>
        <taxon>Craniata</taxon>
        <taxon>Vertebrata</taxon>
        <taxon>Euteleostomi</taxon>
        <taxon>Mammalia</taxon>
        <taxon>Eutheria</taxon>
        <taxon>Euarchontoglires</taxon>
        <taxon>Primates</taxon>
        <taxon>Haplorrhini</taxon>
        <taxon>Catarrhini</taxon>
        <taxon>Hominidae</taxon>
        <taxon>Homo</taxon>
    </lineage>
</organism>